<sequence>MTFDCRVCDQTLKRAQPPAASCMPLAEHEPMSPDSDAGCAGNPFTNLLALGKKDGAEKWHLSGSILDVYSDEQGISSANAGLTDAPCPSILPMRKEIAETDGRALAKERQKKDNHNLIERRRRYNINYRIKELGTLIPKSNDPDMRWNKGTILKASVDYIKWLQKEQQRARELEHRQKKLEHANRQLRLRIQELEIQARAHGLPILASLGTADVGTHITKQQTHPERNLGGCCLQLTPTQGTSPEFYEQAVAFSDPLSHFTDLSFSAALKEEQRLDGMLLSDTICPFGTDPLLSAISPAVSKASSRSSLSSEDGDEL</sequence>
<comment type="function">
    <text evidence="1 3">Transcriptional regulator that acts as a repressor or an activator. Acts as a transcriptional transactivator on the proximal promoter region of the tartrate-resistant acid phosphatase (TRAP) E-box containing promoter. Collaborates with MITF in target gene activation. Acts as a transcriptional repressor on minimal promoter containing element F (that includes an E-box sequence) (By similarity). Binds to element F in an E-box sequence-specific manner (By similarity). Acts as a transcriptional repressor on minimal promoter containing mu E3 enhancer sequence (By similarity). Binds to mu E3 DNA sequence of the immunoglobulin heavy-chain gene enhancer (By similarity). Binds DNA in a homo- or heterodimeric form.</text>
</comment>
<comment type="subunit">
    <text evidence="1">Homodimer. Forms heterodimers with MITF. Interacts with MITF. Forms heterodimers with TFE3 (By similarity).</text>
</comment>
<comment type="subcellular location">
    <subcellularLocation>
        <location evidence="2">Nucleus</location>
    </subcellularLocation>
</comment>
<comment type="tissue specificity">
    <text evidence="6">Expressed in osteoclast-like cells (at protein level). Expressed in cells of the mononuclear phagocyte lineage. Expressed in macrophages and in osteoclast-like cells.</text>
</comment>
<comment type="developmental stage">
    <text evidence="4">Expressed in the early developing retinal pigmented epithelium and in the peripheral retina.</text>
</comment>
<comment type="induction">
    <text evidence="5">Up-regulated in bone marrow-derived macrophages by Th2 cytokines, IL-4, IL-13 and LPS.</text>
</comment>
<comment type="domain">
    <text>Contains an activation domain in the C-terminal region.</text>
</comment>
<comment type="similarity">
    <text evidence="7">Belongs to the MiT/TFE family.</text>
</comment>
<proteinExistence type="evidence at protein level"/>
<reference key="1">
    <citation type="journal article" date="1999" name="Genomics">
        <title>Cloning and characterization of the murine genes for bHLH-ZIP transcription factors TFEC and TFEB reveal a common gene organization for all MiT subfamily members.</title>
        <authorList>
            <person name="Rehli M."/>
            <person name="Den Elzen N."/>
            <person name="Cassady A.I."/>
            <person name="Ostrowski M.C."/>
            <person name="Hume D.A."/>
        </authorList>
    </citation>
    <scope>NUCLEOTIDE SEQUENCE [MRNA]</scope>
    <source>
        <strain>BALB/cJ</strain>
    </source>
</reference>
<reference key="2">
    <citation type="journal article" date="2005" name="Science">
        <title>The transcriptional landscape of the mammalian genome.</title>
        <authorList>
            <person name="Carninci P."/>
            <person name="Kasukawa T."/>
            <person name="Katayama S."/>
            <person name="Gough J."/>
            <person name="Frith M.C."/>
            <person name="Maeda N."/>
            <person name="Oyama R."/>
            <person name="Ravasi T."/>
            <person name="Lenhard B."/>
            <person name="Wells C."/>
            <person name="Kodzius R."/>
            <person name="Shimokawa K."/>
            <person name="Bajic V.B."/>
            <person name="Brenner S.E."/>
            <person name="Batalov S."/>
            <person name="Forrest A.R."/>
            <person name="Zavolan M."/>
            <person name="Davis M.J."/>
            <person name="Wilming L.G."/>
            <person name="Aidinis V."/>
            <person name="Allen J.E."/>
            <person name="Ambesi-Impiombato A."/>
            <person name="Apweiler R."/>
            <person name="Aturaliya R.N."/>
            <person name="Bailey T.L."/>
            <person name="Bansal M."/>
            <person name="Baxter L."/>
            <person name="Beisel K.W."/>
            <person name="Bersano T."/>
            <person name="Bono H."/>
            <person name="Chalk A.M."/>
            <person name="Chiu K.P."/>
            <person name="Choudhary V."/>
            <person name="Christoffels A."/>
            <person name="Clutterbuck D.R."/>
            <person name="Crowe M.L."/>
            <person name="Dalla E."/>
            <person name="Dalrymple B.P."/>
            <person name="de Bono B."/>
            <person name="Della Gatta G."/>
            <person name="di Bernardo D."/>
            <person name="Down T."/>
            <person name="Engstrom P."/>
            <person name="Fagiolini M."/>
            <person name="Faulkner G."/>
            <person name="Fletcher C.F."/>
            <person name="Fukushima T."/>
            <person name="Furuno M."/>
            <person name="Futaki S."/>
            <person name="Gariboldi M."/>
            <person name="Georgii-Hemming P."/>
            <person name="Gingeras T.R."/>
            <person name="Gojobori T."/>
            <person name="Green R.E."/>
            <person name="Gustincich S."/>
            <person name="Harbers M."/>
            <person name="Hayashi Y."/>
            <person name="Hensch T.K."/>
            <person name="Hirokawa N."/>
            <person name="Hill D."/>
            <person name="Huminiecki L."/>
            <person name="Iacono M."/>
            <person name="Ikeo K."/>
            <person name="Iwama A."/>
            <person name="Ishikawa T."/>
            <person name="Jakt M."/>
            <person name="Kanapin A."/>
            <person name="Katoh M."/>
            <person name="Kawasawa Y."/>
            <person name="Kelso J."/>
            <person name="Kitamura H."/>
            <person name="Kitano H."/>
            <person name="Kollias G."/>
            <person name="Krishnan S.P."/>
            <person name="Kruger A."/>
            <person name="Kummerfeld S.K."/>
            <person name="Kurochkin I.V."/>
            <person name="Lareau L.F."/>
            <person name="Lazarevic D."/>
            <person name="Lipovich L."/>
            <person name="Liu J."/>
            <person name="Liuni S."/>
            <person name="McWilliam S."/>
            <person name="Madan Babu M."/>
            <person name="Madera M."/>
            <person name="Marchionni L."/>
            <person name="Matsuda H."/>
            <person name="Matsuzawa S."/>
            <person name="Miki H."/>
            <person name="Mignone F."/>
            <person name="Miyake S."/>
            <person name="Morris K."/>
            <person name="Mottagui-Tabar S."/>
            <person name="Mulder N."/>
            <person name="Nakano N."/>
            <person name="Nakauchi H."/>
            <person name="Ng P."/>
            <person name="Nilsson R."/>
            <person name="Nishiguchi S."/>
            <person name="Nishikawa S."/>
            <person name="Nori F."/>
            <person name="Ohara O."/>
            <person name="Okazaki Y."/>
            <person name="Orlando V."/>
            <person name="Pang K.C."/>
            <person name="Pavan W.J."/>
            <person name="Pavesi G."/>
            <person name="Pesole G."/>
            <person name="Petrovsky N."/>
            <person name="Piazza S."/>
            <person name="Reed J."/>
            <person name="Reid J.F."/>
            <person name="Ring B.Z."/>
            <person name="Ringwald M."/>
            <person name="Rost B."/>
            <person name="Ruan Y."/>
            <person name="Salzberg S.L."/>
            <person name="Sandelin A."/>
            <person name="Schneider C."/>
            <person name="Schoenbach C."/>
            <person name="Sekiguchi K."/>
            <person name="Semple C.A."/>
            <person name="Seno S."/>
            <person name="Sessa L."/>
            <person name="Sheng Y."/>
            <person name="Shibata Y."/>
            <person name="Shimada H."/>
            <person name="Shimada K."/>
            <person name="Silva D."/>
            <person name="Sinclair B."/>
            <person name="Sperling S."/>
            <person name="Stupka E."/>
            <person name="Sugiura K."/>
            <person name="Sultana R."/>
            <person name="Takenaka Y."/>
            <person name="Taki K."/>
            <person name="Tammoja K."/>
            <person name="Tan S.L."/>
            <person name="Tang S."/>
            <person name="Taylor M.S."/>
            <person name="Tegner J."/>
            <person name="Teichmann S.A."/>
            <person name="Ueda H.R."/>
            <person name="van Nimwegen E."/>
            <person name="Verardo R."/>
            <person name="Wei C.L."/>
            <person name="Yagi K."/>
            <person name="Yamanishi H."/>
            <person name="Zabarovsky E."/>
            <person name="Zhu S."/>
            <person name="Zimmer A."/>
            <person name="Hide W."/>
            <person name="Bult C."/>
            <person name="Grimmond S.M."/>
            <person name="Teasdale R.D."/>
            <person name="Liu E.T."/>
            <person name="Brusic V."/>
            <person name="Quackenbush J."/>
            <person name="Wahlestedt C."/>
            <person name="Mattick J.S."/>
            <person name="Hume D.A."/>
            <person name="Kai C."/>
            <person name="Sasaki D."/>
            <person name="Tomaru Y."/>
            <person name="Fukuda S."/>
            <person name="Kanamori-Katayama M."/>
            <person name="Suzuki M."/>
            <person name="Aoki J."/>
            <person name="Arakawa T."/>
            <person name="Iida J."/>
            <person name="Imamura K."/>
            <person name="Itoh M."/>
            <person name="Kato T."/>
            <person name="Kawaji H."/>
            <person name="Kawagashira N."/>
            <person name="Kawashima T."/>
            <person name="Kojima M."/>
            <person name="Kondo S."/>
            <person name="Konno H."/>
            <person name="Nakano K."/>
            <person name="Ninomiya N."/>
            <person name="Nishio T."/>
            <person name="Okada M."/>
            <person name="Plessy C."/>
            <person name="Shibata K."/>
            <person name="Shiraki T."/>
            <person name="Suzuki S."/>
            <person name="Tagami M."/>
            <person name="Waki K."/>
            <person name="Watahiki A."/>
            <person name="Okamura-Oho Y."/>
            <person name="Suzuki H."/>
            <person name="Kawai J."/>
            <person name="Hayashizaki Y."/>
        </authorList>
    </citation>
    <scope>NUCLEOTIDE SEQUENCE [LARGE SCALE MRNA]</scope>
    <source>
        <strain>C57BL/6J</strain>
        <strain>NOD</strain>
        <tissue>Spleen</tissue>
        <tissue>Urinary bladder</tissue>
    </source>
</reference>
<reference key="3">
    <citation type="journal article" date="2004" name="Genome Res.">
        <title>The status, quality, and expansion of the NIH full-length cDNA project: the Mammalian Gene Collection (MGC).</title>
        <authorList>
            <consortium name="The MGC Project Team"/>
        </authorList>
    </citation>
    <scope>NUCLEOTIDE SEQUENCE [LARGE SCALE MRNA]</scope>
    <source>
        <tissue>Pancreas</tissue>
    </source>
</reference>
<reference key="4">
    <citation type="journal article" date="1994" name="Genes Dev.">
        <title>microphthalmia, a critical factor in melanocyte development, defines a discrete transcription factor family.</title>
        <authorList>
            <person name="Hemesath T.J."/>
            <person name="Steingrimsson E."/>
            <person name="McGill G."/>
            <person name="Hansen M.J."/>
            <person name="Vaught J."/>
            <person name="Hodgkinson C.A."/>
            <person name="Arnheiter H."/>
            <person name="Copeland N.G."/>
            <person name="Jenkins N.A."/>
            <person name="Fisher D.E."/>
        </authorList>
    </citation>
    <scope>SUBUNIT</scope>
</reference>
<reference key="5">
    <citation type="journal article" date="1999" name="J. Immunol.">
        <title>TFEC is a macrophage-restricted member of the microphthalmia-TFE subfamily of basic helix-loop-helix leucine zipper transcription factors.</title>
        <authorList>
            <person name="Rehli M."/>
            <person name="Lichanska A."/>
            <person name="Cassady A.I."/>
            <person name="Ostrowski M.C."/>
            <person name="Hume D.A."/>
        </authorList>
    </citation>
    <scope>TISSUE SPECIFICITY</scope>
</reference>
<reference key="6">
    <citation type="journal article" date="2002" name="J. Leukoc. Biol.">
        <title>The microphthalmia transcription factor and the related helix-loop-helix zipper factors TFE-3 and TFE-C collaborate to activate the tartrate-resistant acid phosphatase promoter.</title>
        <authorList>
            <person name="Mansky K.C."/>
            <person name="Sulzbacher S."/>
            <person name="Purdom G."/>
            <person name="Nelsen L."/>
            <person name="Hume D.A."/>
            <person name="Rehli M."/>
            <person name="Ostrowski M.C."/>
        </authorList>
    </citation>
    <scope>FUNCTION</scope>
    <scope>INTERACTION WITH MITF</scope>
</reference>
<reference key="7">
    <citation type="journal article" date="2004" name="Development">
        <title>Transdifferentiation of the retina into pigmented cells in ocular retardation mice defines a new function of the homeodomain gene Chx10.</title>
        <authorList>
            <person name="Rowan S."/>
            <person name="Chen C.-M.A."/>
            <person name="Young T.L."/>
            <person name="Fisher D.E."/>
            <person name="Cepko C.L."/>
        </authorList>
    </citation>
    <scope>DEVELOPMENTAL STAGE</scope>
</reference>
<reference key="8">
    <citation type="journal article" date="2005" name="J. Immunol.">
        <title>Transcription factor Tfec contributes to the IL-4-inducible expression of a small group of genes in mouse macrophages including the granulocyte colony-stimulating factor receptor.</title>
        <authorList>
            <person name="Rehli M."/>
            <person name="Sulzbacher S."/>
            <person name="Pape S."/>
            <person name="Ravasi T."/>
            <person name="Wells C.A."/>
            <person name="Heinz S."/>
            <person name="Sollner L."/>
            <person name="El Chartouni C."/>
            <person name="Krause S.W."/>
            <person name="Steingrimsson E."/>
            <person name="Hume D.A."/>
            <person name="Andreesen R."/>
        </authorList>
    </citation>
    <scope>INDUCTION</scope>
</reference>
<keyword id="KW-0010">Activator</keyword>
<keyword id="KW-0238">DNA-binding</keyword>
<keyword id="KW-0539">Nucleus</keyword>
<keyword id="KW-1185">Reference proteome</keyword>
<keyword id="KW-0678">Repressor</keyword>
<keyword id="KW-0804">Transcription</keyword>
<keyword id="KW-0805">Transcription regulation</keyword>
<accession>Q9WTW4</accession>
<accession>Q3TWR7</accession>
<feature type="chain" id="PRO_0000313565" description="Transcription factor EC">
    <location>
        <begin position="1"/>
        <end position="317"/>
    </location>
</feature>
<feature type="domain" description="bHLH" evidence="2">
    <location>
        <begin position="110"/>
        <end position="163"/>
    </location>
</feature>
<feature type="region of interest" description="Necessary for transcriptional transactivation" evidence="1">
    <location>
        <begin position="1"/>
        <end position="90"/>
    </location>
</feature>
<feature type="region of interest" description="Necessary for transcriptional transactivation" evidence="1">
    <location>
        <begin position="242"/>
        <end position="317"/>
    </location>
</feature>
<feature type="sequence conflict" description="In Ref. 2; BAE35199." evidence="7" ref="2">
    <original>A</original>
    <variation>V</variation>
    <location>
        <position position="170"/>
    </location>
</feature>
<evidence type="ECO:0000250" key="1"/>
<evidence type="ECO:0000255" key="2">
    <source>
        <dbReference type="PROSITE-ProRule" id="PRU00981"/>
    </source>
</evidence>
<evidence type="ECO:0000269" key="3">
    <source>
    </source>
</evidence>
<evidence type="ECO:0000269" key="4">
    <source>
    </source>
</evidence>
<evidence type="ECO:0000269" key="5">
    <source>
    </source>
</evidence>
<evidence type="ECO:0000269" key="6">
    <source>
    </source>
</evidence>
<evidence type="ECO:0000305" key="7"/>
<organism>
    <name type="scientific">Mus musculus</name>
    <name type="common">Mouse</name>
    <dbReference type="NCBI Taxonomy" id="10090"/>
    <lineage>
        <taxon>Eukaryota</taxon>
        <taxon>Metazoa</taxon>
        <taxon>Chordata</taxon>
        <taxon>Craniata</taxon>
        <taxon>Vertebrata</taxon>
        <taxon>Euteleostomi</taxon>
        <taxon>Mammalia</taxon>
        <taxon>Eutheria</taxon>
        <taxon>Euarchontoglires</taxon>
        <taxon>Glires</taxon>
        <taxon>Rodentia</taxon>
        <taxon>Myomorpha</taxon>
        <taxon>Muroidea</taxon>
        <taxon>Muridae</taxon>
        <taxon>Murinae</taxon>
        <taxon>Mus</taxon>
        <taxon>Mus</taxon>
    </lineage>
</organism>
<protein>
    <recommendedName>
        <fullName>Transcription factor EC</fullName>
        <shortName>TFE-C</shortName>
        <shortName>mTFEC</shortName>
    </recommendedName>
</protein>
<dbReference type="EMBL" id="AF077742">
    <property type="protein sequence ID" value="AAD24426.1"/>
    <property type="molecule type" value="mRNA"/>
</dbReference>
<dbReference type="EMBL" id="AK137141">
    <property type="protein sequence ID" value="BAE23248.1"/>
    <property type="molecule type" value="mRNA"/>
</dbReference>
<dbReference type="EMBL" id="AK156327">
    <property type="protein sequence ID" value="BAE33676.1"/>
    <property type="molecule type" value="mRNA"/>
</dbReference>
<dbReference type="EMBL" id="AK159579">
    <property type="protein sequence ID" value="BAE35199.1"/>
    <property type="molecule type" value="mRNA"/>
</dbReference>
<dbReference type="EMBL" id="BC098494">
    <property type="protein sequence ID" value="AAH98494.1"/>
    <property type="molecule type" value="mRNA"/>
</dbReference>
<dbReference type="CCDS" id="CCDS19920.1"/>
<dbReference type="RefSeq" id="NP_112475.1">
    <property type="nucleotide sequence ID" value="NM_031198.3"/>
</dbReference>
<dbReference type="SMR" id="Q9WTW4"/>
<dbReference type="BioGRID" id="204017">
    <property type="interactions" value="1"/>
</dbReference>
<dbReference type="FunCoup" id="Q9WTW4">
    <property type="interactions" value="1633"/>
</dbReference>
<dbReference type="STRING" id="10090.ENSMUSP00000031533"/>
<dbReference type="PhosphoSitePlus" id="Q9WTW4"/>
<dbReference type="PaxDb" id="10090-ENSMUSP00000031533"/>
<dbReference type="PeptideAtlas" id="Q9WTW4"/>
<dbReference type="ProteomicsDB" id="262891"/>
<dbReference type="Antibodypedia" id="31571">
    <property type="antibodies" value="228 antibodies from 29 providers"/>
</dbReference>
<dbReference type="DNASU" id="21426"/>
<dbReference type="Ensembl" id="ENSMUST00000031533.11">
    <property type="protein sequence ID" value="ENSMUSP00000031533.8"/>
    <property type="gene ID" value="ENSMUSG00000029553.11"/>
</dbReference>
<dbReference type="GeneID" id="21426"/>
<dbReference type="KEGG" id="mmu:21426"/>
<dbReference type="UCSC" id="uc009aze.2">
    <property type="organism name" value="mouse"/>
</dbReference>
<dbReference type="AGR" id="MGI:1333760"/>
<dbReference type="CTD" id="22797"/>
<dbReference type="MGI" id="MGI:1333760">
    <property type="gene designation" value="Tfec"/>
</dbReference>
<dbReference type="VEuPathDB" id="HostDB:ENSMUSG00000029553"/>
<dbReference type="eggNOG" id="KOG1318">
    <property type="taxonomic scope" value="Eukaryota"/>
</dbReference>
<dbReference type="GeneTree" id="ENSGT00940000159404"/>
<dbReference type="HOGENOM" id="CLU_031638_0_0_1"/>
<dbReference type="InParanoid" id="Q9WTW4"/>
<dbReference type="OMA" id="NHENEMD"/>
<dbReference type="OrthoDB" id="6242697at2759"/>
<dbReference type="PhylomeDB" id="Q9WTW4"/>
<dbReference type="TreeFam" id="TF317174"/>
<dbReference type="BioGRID-ORCS" id="21426">
    <property type="hits" value="1 hit in 77 CRISPR screens"/>
</dbReference>
<dbReference type="ChiTaRS" id="Tfec">
    <property type="organism name" value="mouse"/>
</dbReference>
<dbReference type="PRO" id="PR:Q9WTW4"/>
<dbReference type="Proteomes" id="UP000000589">
    <property type="component" value="Chromosome 6"/>
</dbReference>
<dbReference type="RNAct" id="Q9WTW4">
    <property type="molecule type" value="protein"/>
</dbReference>
<dbReference type="Bgee" id="ENSMUSG00000029553">
    <property type="expression patterns" value="Expressed in epithelium of small intestine and 101 other cell types or tissues"/>
</dbReference>
<dbReference type="ExpressionAtlas" id="Q9WTW4">
    <property type="expression patterns" value="baseline and differential"/>
</dbReference>
<dbReference type="GO" id="GO:0005829">
    <property type="term" value="C:cytosol"/>
    <property type="evidence" value="ECO:0007669"/>
    <property type="project" value="Ensembl"/>
</dbReference>
<dbReference type="GO" id="GO:0005654">
    <property type="term" value="C:nucleoplasm"/>
    <property type="evidence" value="ECO:0000304"/>
    <property type="project" value="Reactome"/>
</dbReference>
<dbReference type="GO" id="GO:0001228">
    <property type="term" value="F:DNA-binding transcription activator activity, RNA polymerase II-specific"/>
    <property type="evidence" value="ECO:0007669"/>
    <property type="project" value="Ensembl"/>
</dbReference>
<dbReference type="GO" id="GO:0001227">
    <property type="term" value="F:DNA-binding transcription repressor activity, RNA polymerase II-specific"/>
    <property type="evidence" value="ECO:0007669"/>
    <property type="project" value="Ensembl"/>
</dbReference>
<dbReference type="GO" id="GO:0046983">
    <property type="term" value="F:protein dimerization activity"/>
    <property type="evidence" value="ECO:0007669"/>
    <property type="project" value="InterPro"/>
</dbReference>
<dbReference type="GO" id="GO:0000978">
    <property type="term" value="F:RNA polymerase II cis-regulatory region sequence-specific DNA binding"/>
    <property type="evidence" value="ECO:0007669"/>
    <property type="project" value="Ensembl"/>
</dbReference>
<dbReference type="GO" id="GO:0034605">
    <property type="term" value="P:cellular response to heat"/>
    <property type="evidence" value="ECO:0000314"/>
    <property type="project" value="MGI"/>
</dbReference>
<dbReference type="CDD" id="cd18926">
    <property type="entry name" value="bHLHzip_MITF"/>
    <property type="match status" value="1"/>
</dbReference>
<dbReference type="FunFam" id="4.10.280.10:FF:000003">
    <property type="entry name" value="microphthalmia-associated transcription factor isoform X1"/>
    <property type="match status" value="1"/>
</dbReference>
<dbReference type="Gene3D" id="4.10.280.10">
    <property type="entry name" value="Helix-loop-helix DNA-binding domain"/>
    <property type="match status" value="1"/>
</dbReference>
<dbReference type="InterPro" id="IPR011598">
    <property type="entry name" value="bHLH_dom"/>
</dbReference>
<dbReference type="InterPro" id="IPR036638">
    <property type="entry name" value="HLH_DNA-bd_sf"/>
</dbReference>
<dbReference type="InterPro" id="IPR021802">
    <property type="entry name" value="MiT/TFE_C"/>
</dbReference>
<dbReference type="PANTHER" id="PTHR45776">
    <property type="entry name" value="MIP04163P"/>
    <property type="match status" value="1"/>
</dbReference>
<dbReference type="PANTHER" id="PTHR45776:SF1">
    <property type="entry name" value="TRANSCRIPTION FACTOR EC"/>
    <property type="match status" value="1"/>
</dbReference>
<dbReference type="Pfam" id="PF11851">
    <property type="entry name" value="DUF3371"/>
    <property type="match status" value="1"/>
</dbReference>
<dbReference type="Pfam" id="PF00010">
    <property type="entry name" value="HLH"/>
    <property type="match status" value="1"/>
</dbReference>
<dbReference type="SMART" id="SM00353">
    <property type="entry name" value="HLH"/>
    <property type="match status" value="1"/>
</dbReference>
<dbReference type="SUPFAM" id="SSF47459">
    <property type="entry name" value="HLH, helix-loop-helix DNA-binding domain"/>
    <property type="match status" value="1"/>
</dbReference>
<dbReference type="PROSITE" id="PS50888">
    <property type="entry name" value="BHLH"/>
    <property type="match status" value="1"/>
</dbReference>
<name>TFEC_MOUSE</name>
<gene>
    <name type="primary">Tfec</name>
    <name type="synonym">Tcfec</name>
</gene>